<gene>
    <name evidence="1" type="primary">carB</name>
    <name type="ordered locus">Ta0791</name>
</gene>
<name>CARB_THEAC</name>
<organism>
    <name type="scientific">Thermoplasma acidophilum (strain ATCC 25905 / DSM 1728 / JCM 9062 / NBRC 15155 / AMRC-C165)</name>
    <dbReference type="NCBI Taxonomy" id="273075"/>
    <lineage>
        <taxon>Archaea</taxon>
        <taxon>Methanobacteriati</taxon>
        <taxon>Thermoplasmatota</taxon>
        <taxon>Thermoplasmata</taxon>
        <taxon>Thermoplasmatales</taxon>
        <taxon>Thermoplasmataceae</taxon>
        <taxon>Thermoplasma</taxon>
    </lineage>
</organism>
<comment type="function">
    <text evidence="1">Large subunit of the glutamine-dependent carbamoyl phosphate synthetase (CPSase). CPSase catalyzes the formation of carbamoyl phosphate from the ammonia moiety of glutamine, carbonate, and phosphate donated by ATP, constituting the first step of 2 biosynthetic pathways, one leading to arginine and/or urea and the other to pyrimidine nucleotides. The large subunit (synthetase) binds the substrates ammonia (free or transferred from glutamine from the small subunit), hydrogencarbonate and ATP and carries out an ATP-coupled ligase reaction, activating hydrogencarbonate by forming carboxy phosphate which reacts with ammonia to form carbamoyl phosphate.</text>
</comment>
<comment type="catalytic activity">
    <reaction evidence="1">
        <text>hydrogencarbonate + L-glutamine + 2 ATP + H2O = carbamoyl phosphate + L-glutamate + 2 ADP + phosphate + 2 H(+)</text>
        <dbReference type="Rhea" id="RHEA:18633"/>
        <dbReference type="ChEBI" id="CHEBI:15377"/>
        <dbReference type="ChEBI" id="CHEBI:15378"/>
        <dbReference type="ChEBI" id="CHEBI:17544"/>
        <dbReference type="ChEBI" id="CHEBI:29985"/>
        <dbReference type="ChEBI" id="CHEBI:30616"/>
        <dbReference type="ChEBI" id="CHEBI:43474"/>
        <dbReference type="ChEBI" id="CHEBI:58228"/>
        <dbReference type="ChEBI" id="CHEBI:58359"/>
        <dbReference type="ChEBI" id="CHEBI:456216"/>
        <dbReference type="EC" id="6.3.5.5"/>
    </reaction>
</comment>
<comment type="catalytic activity">
    <molecule>Carbamoyl phosphate synthase large chain</molecule>
    <reaction evidence="1">
        <text>hydrogencarbonate + NH4(+) + 2 ATP = carbamoyl phosphate + 2 ADP + phosphate + 2 H(+)</text>
        <dbReference type="Rhea" id="RHEA:18029"/>
        <dbReference type="ChEBI" id="CHEBI:15378"/>
        <dbReference type="ChEBI" id="CHEBI:17544"/>
        <dbReference type="ChEBI" id="CHEBI:28938"/>
        <dbReference type="ChEBI" id="CHEBI:30616"/>
        <dbReference type="ChEBI" id="CHEBI:43474"/>
        <dbReference type="ChEBI" id="CHEBI:58228"/>
        <dbReference type="ChEBI" id="CHEBI:456216"/>
        <dbReference type="EC" id="6.3.4.16"/>
    </reaction>
</comment>
<comment type="cofactor">
    <cofactor evidence="1">
        <name>Mg(2+)</name>
        <dbReference type="ChEBI" id="CHEBI:18420"/>
    </cofactor>
    <cofactor evidence="1">
        <name>Mn(2+)</name>
        <dbReference type="ChEBI" id="CHEBI:29035"/>
    </cofactor>
    <text evidence="1">Binds 4 Mg(2+) or Mn(2+) ions per subunit.</text>
</comment>
<comment type="pathway">
    <text evidence="1">Amino-acid biosynthesis; L-arginine biosynthesis; carbamoyl phosphate from bicarbonate: step 1/1.</text>
</comment>
<comment type="pathway">
    <text evidence="1">Pyrimidine metabolism; UMP biosynthesis via de novo pathway; (S)-dihydroorotate from bicarbonate: step 1/3.</text>
</comment>
<comment type="subunit">
    <text evidence="1">Composed of two chains; the small (or glutamine) chain promotes the hydrolysis of glutamine to ammonia, which is used by the large (or ammonia) chain to synthesize carbamoyl phosphate. Tetramer of heterodimers (alpha,beta)4.</text>
</comment>
<comment type="domain">
    <text evidence="1">The large subunit is composed of 2 ATP-grasp domains that are involved in binding the 2 ATP molecules needed for carbamoyl phosphate synthesis. The N-terminal ATP-grasp domain (referred to as the carboxyphosphate synthetic component) catalyzes the ATP-dependent phosphorylation of hydrogencarbonate to carboxyphosphate and the subsequent nucleophilic attack by ammonia to form a carbamate intermediate. The C-terminal ATP-grasp domain (referred to as the carbamoyl phosphate synthetic component) then catalyzes the phosphorylation of carbamate with the second ATP to form the end product carbamoyl phosphate. The reactive and unstable enzyme intermediates are sequentially channeled from one active site to the next through the interior of the protein over a distance of at least 96 A.</text>
</comment>
<comment type="similarity">
    <text evidence="1">Belongs to the CarB family.</text>
</comment>
<feature type="chain" id="PRO_0000145086" description="Carbamoyl phosphate synthase large chain">
    <location>
        <begin position="1"/>
        <end position="1047"/>
    </location>
</feature>
<feature type="domain" description="ATP-grasp 1" evidence="1">
    <location>
        <begin position="133"/>
        <end position="325"/>
    </location>
</feature>
<feature type="domain" description="ATP-grasp 2" evidence="1">
    <location>
        <begin position="665"/>
        <end position="854"/>
    </location>
</feature>
<feature type="domain" description="MGS-like" evidence="1">
    <location>
        <begin position="910"/>
        <end position="1047"/>
    </location>
</feature>
<feature type="region of interest" description="Carboxyphosphate synthetic domain" evidence="1">
    <location>
        <begin position="1"/>
        <end position="398"/>
    </location>
</feature>
<feature type="region of interest" description="Oligomerization domain" evidence="1">
    <location>
        <begin position="399"/>
        <end position="539"/>
    </location>
</feature>
<feature type="region of interest" description="Carbamoyl phosphate synthetic domain" evidence="1">
    <location>
        <begin position="540"/>
        <end position="916"/>
    </location>
</feature>
<feature type="region of interest" description="Allosteric domain" evidence="1">
    <location>
        <begin position="916"/>
        <end position="1047"/>
    </location>
</feature>
<feature type="binding site" evidence="1">
    <location>
        <position position="129"/>
    </location>
    <ligand>
        <name>ATP</name>
        <dbReference type="ChEBI" id="CHEBI:30616"/>
        <label>1</label>
    </ligand>
</feature>
<feature type="binding site" evidence="1">
    <location>
        <position position="169"/>
    </location>
    <ligand>
        <name>ATP</name>
        <dbReference type="ChEBI" id="CHEBI:30616"/>
        <label>1</label>
    </ligand>
</feature>
<feature type="binding site" evidence="1">
    <location>
        <position position="175"/>
    </location>
    <ligand>
        <name>ATP</name>
        <dbReference type="ChEBI" id="CHEBI:30616"/>
        <label>1</label>
    </ligand>
</feature>
<feature type="binding site" evidence="1">
    <location>
        <position position="176"/>
    </location>
    <ligand>
        <name>ATP</name>
        <dbReference type="ChEBI" id="CHEBI:30616"/>
        <label>1</label>
    </ligand>
</feature>
<feature type="binding site" evidence="1">
    <location>
        <position position="208"/>
    </location>
    <ligand>
        <name>ATP</name>
        <dbReference type="ChEBI" id="CHEBI:30616"/>
        <label>1</label>
    </ligand>
</feature>
<feature type="binding site" evidence="1">
    <location>
        <position position="210"/>
    </location>
    <ligand>
        <name>ATP</name>
        <dbReference type="ChEBI" id="CHEBI:30616"/>
        <label>1</label>
    </ligand>
</feature>
<feature type="binding site" evidence="1">
    <location>
        <position position="215"/>
    </location>
    <ligand>
        <name>ATP</name>
        <dbReference type="ChEBI" id="CHEBI:30616"/>
        <label>1</label>
    </ligand>
</feature>
<feature type="binding site" evidence="1">
    <location>
        <position position="241"/>
    </location>
    <ligand>
        <name>ATP</name>
        <dbReference type="ChEBI" id="CHEBI:30616"/>
        <label>1</label>
    </ligand>
</feature>
<feature type="binding site" evidence="1">
    <location>
        <position position="242"/>
    </location>
    <ligand>
        <name>ATP</name>
        <dbReference type="ChEBI" id="CHEBI:30616"/>
        <label>1</label>
    </ligand>
</feature>
<feature type="binding site" evidence="1">
    <location>
        <position position="243"/>
    </location>
    <ligand>
        <name>ATP</name>
        <dbReference type="ChEBI" id="CHEBI:30616"/>
        <label>1</label>
    </ligand>
</feature>
<feature type="binding site" evidence="1">
    <location>
        <position position="284"/>
    </location>
    <ligand>
        <name>ATP</name>
        <dbReference type="ChEBI" id="CHEBI:30616"/>
        <label>1</label>
    </ligand>
</feature>
<feature type="binding site" evidence="1">
    <location>
        <position position="284"/>
    </location>
    <ligand>
        <name>Mg(2+)</name>
        <dbReference type="ChEBI" id="CHEBI:18420"/>
        <label>1</label>
    </ligand>
</feature>
<feature type="binding site" evidence="1">
    <location>
        <position position="284"/>
    </location>
    <ligand>
        <name>Mn(2+)</name>
        <dbReference type="ChEBI" id="CHEBI:29035"/>
        <label>1</label>
    </ligand>
</feature>
<feature type="binding site" evidence="1">
    <location>
        <position position="296"/>
    </location>
    <ligand>
        <name>ATP</name>
        <dbReference type="ChEBI" id="CHEBI:30616"/>
        <label>1</label>
    </ligand>
</feature>
<feature type="binding site" evidence="1">
    <location>
        <position position="296"/>
    </location>
    <ligand>
        <name>Mg(2+)</name>
        <dbReference type="ChEBI" id="CHEBI:18420"/>
        <label>1</label>
    </ligand>
</feature>
<feature type="binding site" evidence="1">
    <location>
        <position position="296"/>
    </location>
    <ligand>
        <name>Mg(2+)</name>
        <dbReference type="ChEBI" id="CHEBI:18420"/>
        <label>2</label>
    </ligand>
</feature>
<feature type="binding site" evidence="1">
    <location>
        <position position="296"/>
    </location>
    <ligand>
        <name>Mn(2+)</name>
        <dbReference type="ChEBI" id="CHEBI:29035"/>
        <label>1</label>
    </ligand>
</feature>
<feature type="binding site" evidence="1">
    <location>
        <position position="296"/>
    </location>
    <ligand>
        <name>Mn(2+)</name>
        <dbReference type="ChEBI" id="CHEBI:29035"/>
        <label>2</label>
    </ligand>
</feature>
<feature type="binding site" evidence="1">
    <location>
        <position position="298"/>
    </location>
    <ligand>
        <name>Mg(2+)</name>
        <dbReference type="ChEBI" id="CHEBI:18420"/>
        <label>2</label>
    </ligand>
</feature>
<feature type="binding site" evidence="1">
    <location>
        <position position="298"/>
    </location>
    <ligand>
        <name>Mn(2+)</name>
        <dbReference type="ChEBI" id="CHEBI:29035"/>
        <label>2</label>
    </ligand>
</feature>
<feature type="binding site" evidence="1">
    <location>
        <position position="701"/>
    </location>
    <ligand>
        <name>ATP</name>
        <dbReference type="ChEBI" id="CHEBI:30616"/>
        <label>2</label>
    </ligand>
</feature>
<feature type="binding site" evidence="1">
    <location>
        <position position="738"/>
    </location>
    <ligand>
        <name>ATP</name>
        <dbReference type="ChEBI" id="CHEBI:30616"/>
        <label>2</label>
    </ligand>
</feature>
<feature type="binding site" evidence="1">
    <location>
        <position position="740"/>
    </location>
    <ligand>
        <name>ATP</name>
        <dbReference type="ChEBI" id="CHEBI:30616"/>
        <label>2</label>
    </ligand>
</feature>
<feature type="binding site" evidence="1">
    <location>
        <position position="745"/>
    </location>
    <ligand>
        <name>ATP</name>
        <dbReference type="ChEBI" id="CHEBI:30616"/>
        <label>2</label>
    </ligand>
</feature>
<feature type="binding site" evidence="1">
    <location>
        <position position="770"/>
    </location>
    <ligand>
        <name>ATP</name>
        <dbReference type="ChEBI" id="CHEBI:30616"/>
        <label>2</label>
    </ligand>
</feature>
<feature type="binding site" evidence="1">
    <location>
        <position position="771"/>
    </location>
    <ligand>
        <name>ATP</name>
        <dbReference type="ChEBI" id="CHEBI:30616"/>
        <label>2</label>
    </ligand>
</feature>
<feature type="binding site" evidence="1">
    <location>
        <position position="772"/>
    </location>
    <ligand>
        <name>ATP</name>
        <dbReference type="ChEBI" id="CHEBI:30616"/>
        <label>2</label>
    </ligand>
</feature>
<feature type="binding site" evidence="1">
    <location>
        <position position="773"/>
    </location>
    <ligand>
        <name>ATP</name>
        <dbReference type="ChEBI" id="CHEBI:30616"/>
        <label>2</label>
    </ligand>
</feature>
<feature type="binding site" evidence="1">
    <location>
        <position position="813"/>
    </location>
    <ligand>
        <name>ATP</name>
        <dbReference type="ChEBI" id="CHEBI:30616"/>
        <label>2</label>
    </ligand>
</feature>
<feature type="binding site" evidence="1">
    <location>
        <position position="813"/>
    </location>
    <ligand>
        <name>Mg(2+)</name>
        <dbReference type="ChEBI" id="CHEBI:18420"/>
        <label>3</label>
    </ligand>
</feature>
<feature type="binding site" evidence="1">
    <location>
        <position position="813"/>
    </location>
    <ligand>
        <name>Mn(2+)</name>
        <dbReference type="ChEBI" id="CHEBI:29035"/>
        <label>3</label>
    </ligand>
</feature>
<feature type="binding site" evidence="1">
    <location>
        <position position="825"/>
    </location>
    <ligand>
        <name>ATP</name>
        <dbReference type="ChEBI" id="CHEBI:30616"/>
        <label>2</label>
    </ligand>
</feature>
<feature type="binding site" evidence="1">
    <location>
        <position position="825"/>
    </location>
    <ligand>
        <name>Mg(2+)</name>
        <dbReference type="ChEBI" id="CHEBI:18420"/>
        <label>3</label>
    </ligand>
</feature>
<feature type="binding site" evidence="1">
    <location>
        <position position="825"/>
    </location>
    <ligand>
        <name>Mg(2+)</name>
        <dbReference type="ChEBI" id="CHEBI:18420"/>
        <label>4</label>
    </ligand>
</feature>
<feature type="binding site" evidence="1">
    <location>
        <position position="825"/>
    </location>
    <ligand>
        <name>Mn(2+)</name>
        <dbReference type="ChEBI" id="CHEBI:29035"/>
        <label>3</label>
    </ligand>
</feature>
<feature type="binding site" evidence="1">
    <location>
        <position position="825"/>
    </location>
    <ligand>
        <name>Mn(2+)</name>
        <dbReference type="ChEBI" id="CHEBI:29035"/>
        <label>4</label>
    </ligand>
</feature>
<feature type="binding site" evidence="1">
    <location>
        <position position="827"/>
    </location>
    <ligand>
        <name>Mg(2+)</name>
        <dbReference type="ChEBI" id="CHEBI:18420"/>
        <label>4</label>
    </ligand>
</feature>
<feature type="binding site" evidence="1">
    <location>
        <position position="827"/>
    </location>
    <ligand>
        <name>Mn(2+)</name>
        <dbReference type="ChEBI" id="CHEBI:29035"/>
        <label>4</label>
    </ligand>
</feature>
<keyword id="KW-0028">Amino-acid biosynthesis</keyword>
<keyword id="KW-0055">Arginine biosynthesis</keyword>
<keyword id="KW-0067">ATP-binding</keyword>
<keyword id="KW-0436">Ligase</keyword>
<keyword id="KW-0460">Magnesium</keyword>
<keyword id="KW-0464">Manganese</keyword>
<keyword id="KW-0479">Metal-binding</keyword>
<keyword id="KW-0547">Nucleotide-binding</keyword>
<keyword id="KW-0665">Pyrimidine biosynthesis</keyword>
<keyword id="KW-1185">Reference proteome</keyword>
<keyword id="KW-0677">Repeat</keyword>
<protein>
    <recommendedName>
        <fullName evidence="1">Carbamoyl phosphate synthase large chain</fullName>
        <ecNumber evidence="1">6.3.4.16</ecNumber>
        <ecNumber evidence="1">6.3.5.5</ecNumber>
    </recommendedName>
    <alternativeName>
        <fullName evidence="1">Carbamoyl phosphate synthetase ammonia chain</fullName>
    </alternativeName>
</protein>
<sequence length="1047" mass="116852">MPRRDDIHRILVIGSGPVVIGQAAEFDYSGSQACLSLREEGYYVVLLNSNPATIQTDHRIADRVYIEPITVEAVERIIEKEKIDAIEPHMGGQTALNLAVKLKNSGILQRYGIKIIGTPVESIELAEDREKFYEFLKAMGEPQPARYRIRRDHIDEDVASIPDIPVIVRTSFSLGGTGGSIVQNRQDLLAMAENLFRASDIDYLEVNESLEGMKEIEYEVIRDSFGNCITVCNMENLDPMGVHTGESIVVTPSQTLSDIEYQMLRDSAIRIISGLGIEGACNIQFALSEGRYYVIEVNPRTSRSSALASKATGYPIARIAAKIAAGYGLHEIKNPITKSTFAAYEPSLDYVTVKIPRWPFDKFSVDRTIGVQMKSIGEVMGIGRTFEEALMKAIASLDNAFSSNIRLHVPDDELWRLIGKPNDRRIFAIFEGLFRNFDVKRMSRLSGYDEYFIEKMRNIVEALRNMDMGRIPENLLRIKRIGIPDEIISAFCGVPADTITKYRIDRNIMPVYKRIDTCSGEFEVAVPYMYSTYEDEDETPDLSGSIMIIGSGPNRIAQGLEFDYGSVKAILALRDMGYRSIMLNSNPETVSTDFDISDALFFEPVTPEYVVNVIRRSGCAGLIVQFSGQTGQNMARRIEEILGKHIVLGTSTESIDRIEDRTVFSRVIEGLGIKQPPFAIAENENDTVRKAMGLGLPIILRSSHVIGGRSMEIIYDVDYLADRAREIFAISKNVLVSKYLENAVEMDVDFVSDGTSYSICGIIVHIEEAGVHSGDATMVYGPGIVPVDIEKKIEGIVGSMVREFRLIGLSNLQIAVRDGDVYVIELNARSSRSVPFISKATGIDWVRLAVECMIGSRIENKRMEAKSYFLKVSVFPFSKFSDMDVVYGPEMKSTGEAMYPGRTLAEALRKSLQRSISSVLITVRDEDKPRIVDIARILLEKGVKLYATAGTSKFLADHGIPTETLYRVRDRREPRILDMISSGSIDMVINTTEMTAGAVRDGFKIRRICIMRGIPLIMNINLARAYAEALGQVEVDYREIGDYLQVS</sequence>
<proteinExistence type="inferred from homology"/>
<accession>Q9HK17</accession>
<evidence type="ECO:0000255" key="1">
    <source>
        <dbReference type="HAMAP-Rule" id="MF_01210"/>
    </source>
</evidence>
<reference key="1">
    <citation type="journal article" date="2000" name="Nature">
        <title>The genome sequence of the thermoacidophilic scavenger Thermoplasma acidophilum.</title>
        <authorList>
            <person name="Ruepp A."/>
            <person name="Graml W."/>
            <person name="Santos-Martinez M.-L."/>
            <person name="Koretke K.K."/>
            <person name="Volker C."/>
            <person name="Mewes H.-W."/>
            <person name="Frishman D."/>
            <person name="Stocker S."/>
            <person name="Lupas A.N."/>
            <person name="Baumeister W."/>
        </authorList>
    </citation>
    <scope>NUCLEOTIDE SEQUENCE [LARGE SCALE GENOMIC DNA]</scope>
    <source>
        <strain>ATCC 25905 / DSM 1728 / JCM 9062 / NBRC 15155 / AMRC-C165</strain>
    </source>
</reference>
<dbReference type="EC" id="6.3.4.16" evidence="1"/>
<dbReference type="EC" id="6.3.5.5" evidence="1"/>
<dbReference type="EMBL" id="AL445065">
    <property type="protein sequence ID" value="CAC11922.1"/>
    <property type="molecule type" value="Genomic_DNA"/>
</dbReference>
<dbReference type="RefSeq" id="WP_010901204.1">
    <property type="nucleotide sequence ID" value="NC_002578.1"/>
</dbReference>
<dbReference type="SMR" id="Q9HK17"/>
<dbReference type="FunCoup" id="Q9HK17">
    <property type="interactions" value="222"/>
</dbReference>
<dbReference type="STRING" id="273075.gene:9572006"/>
<dbReference type="PaxDb" id="273075-Ta0791"/>
<dbReference type="EnsemblBacteria" id="CAC11922">
    <property type="protein sequence ID" value="CAC11922"/>
    <property type="gene ID" value="CAC11922"/>
</dbReference>
<dbReference type="KEGG" id="tac:Ta0791"/>
<dbReference type="eggNOG" id="arCOG01594">
    <property type="taxonomic scope" value="Archaea"/>
</dbReference>
<dbReference type="HOGENOM" id="CLU_000513_1_0_2"/>
<dbReference type="InParanoid" id="Q9HK17"/>
<dbReference type="OrthoDB" id="85487at2157"/>
<dbReference type="UniPathway" id="UPA00068">
    <property type="reaction ID" value="UER00171"/>
</dbReference>
<dbReference type="UniPathway" id="UPA00070">
    <property type="reaction ID" value="UER00115"/>
</dbReference>
<dbReference type="Proteomes" id="UP000001024">
    <property type="component" value="Chromosome"/>
</dbReference>
<dbReference type="GO" id="GO:0005737">
    <property type="term" value="C:cytoplasm"/>
    <property type="evidence" value="ECO:0007669"/>
    <property type="project" value="TreeGrafter"/>
</dbReference>
<dbReference type="GO" id="GO:0005524">
    <property type="term" value="F:ATP binding"/>
    <property type="evidence" value="ECO:0007669"/>
    <property type="project" value="UniProtKB-UniRule"/>
</dbReference>
<dbReference type="GO" id="GO:0004087">
    <property type="term" value="F:carbamoyl-phosphate synthase (ammonia) activity"/>
    <property type="evidence" value="ECO:0007669"/>
    <property type="project" value="RHEA"/>
</dbReference>
<dbReference type="GO" id="GO:0004088">
    <property type="term" value="F:carbamoyl-phosphate synthase (glutamine-hydrolyzing) activity"/>
    <property type="evidence" value="ECO:0007669"/>
    <property type="project" value="UniProtKB-UniRule"/>
</dbReference>
<dbReference type="GO" id="GO:0046872">
    <property type="term" value="F:metal ion binding"/>
    <property type="evidence" value="ECO:0007669"/>
    <property type="project" value="UniProtKB-KW"/>
</dbReference>
<dbReference type="GO" id="GO:0044205">
    <property type="term" value="P:'de novo' UMP biosynthetic process"/>
    <property type="evidence" value="ECO:0007669"/>
    <property type="project" value="UniProtKB-UniRule"/>
</dbReference>
<dbReference type="GO" id="GO:0006541">
    <property type="term" value="P:glutamine metabolic process"/>
    <property type="evidence" value="ECO:0007669"/>
    <property type="project" value="TreeGrafter"/>
</dbReference>
<dbReference type="GO" id="GO:0006526">
    <property type="term" value="P:L-arginine biosynthetic process"/>
    <property type="evidence" value="ECO:0007669"/>
    <property type="project" value="UniProtKB-UniRule"/>
</dbReference>
<dbReference type="CDD" id="cd01424">
    <property type="entry name" value="MGS_CPS_II"/>
    <property type="match status" value="1"/>
</dbReference>
<dbReference type="FunFam" id="3.30.470.20:FF:000026">
    <property type="entry name" value="Carbamoyl-phosphate synthase large chain"/>
    <property type="match status" value="2"/>
</dbReference>
<dbReference type="FunFam" id="3.40.50.20:FF:000001">
    <property type="entry name" value="Carbamoyl-phosphate synthase large chain"/>
    <property type="match status" value="2"/>
</dbReference>
<dbReference type="Gene3D" id="3.40.50.20">
    <property type="match status" value="2"/>
</dbReference>
<dbReference type="Gene3D" id="3.30.1490.20">
    <property type="entry name" value="ATP-grasp fold, A domain"/>
    <property type="match status" value="2"/>
</dbReference>
<dbReference type="Gene3D" id="3.30.470.20">
    <property type="entry name" value="ATP-grasp fold, B domain"/>
    <property type="match status" value="2"/>
</dbReference>
<dbReference type="Gene3D" id="1.10.1030.10">
    <property type="entry name" value="Carbamoyl-phosphate synthetase, large subunit oligomerisation domain"/>
    <property type="match status" value="1"/>
</dbReference>
<dbReference type="Gene3D" id="3.40.50.1380">
    <property type="entry name" value="Methylglyoxal synthase-like domain"/>
    <property type="match status" value="1"/>
</dbReference>
<dbReference type="HAMAP" id="MF_01210_A">
    <property type="entry name" value="CPSase_L_chain_A"/>
    <property type="match status" value="1"/>
</dbReference>
<dbReference type="InterPro" id="IPR011761">
    <property type="entry name" value="ATP-grasp"/>
</dbReference>
<dbReference type="InterPro" id="IPR013815">
    <property type="entry name" value="ATP_grasp_subdomain_1"/>
</dbReference>
<dbReference type="InterPro" id="IPR006275">
    <property type="entry name" value="CarbamoylP_synth_lsu"/>
</dbReference>
<dbReference type="InterPro" id="IPR005480">
    <property type="entry name" value="CarbamoylP_synth_lsu_oligo"/>
</dbReference>
<dbReference type="InterPro" id="IPR036897">
    <property type="entry name" value="CarbamoylP_synth_lsu_oligo_sf"/>
</dbReference>
<dbReference type="InterPro" id="IPR005479">
    <property type="entry name" value="CbamoylP_synth_lsu-like_ATP-bd"/>
</dbReference>
<dbReference type="InterPro" id="IPR005483">
    <property type="entry name" value="CbamoylP_synth_lsu_CPSase_dom"/>
</dbReference>
<dbReference type="InterPro" id="IPR011607">
    <property type="entry name" value="MGS-like_dom"/>
</dbReference>
<dbReference type="InterPro" id="IPR036914">
    <property type="entry name" value="MGS-like_dom_sf"/>
</dbReference>
<dbReference type="InterPro" id="IPR033937">
    <property type="entry name" value="MGS_CPS_CarB"/>
</dbReference>
<dbReference type="InterPro" id="IPR016185">
    <property type="entry name" value="PreATP-grasp_dom_sf"/>
</dbReference>
<dbReference type="NCBIfam" id="TIGR01369">
    <property type="entry name" value="CPSaseII_lrg"/>
    <property type="match status" value="1"/>
</dbReference>
<dbReference type="NCBIfam" id="NF003671">
    <property type="entry name" value="PRK05294.1"/>
    <property type="match status" value="1"/>
</dbReference>
<dbReference type="NCBIfam" id="NF009455">
    <property type="entry name" value="PRK12815.1"/>
    <property type="match status" value="1"/>
</dbReference>
<dbReference type="PANTHER" id="PTHR11405:SF53">
    <property type="entry name" value="CARBAMOYL-PHOSPHATE SYNTHASE [AMMONIA], MITOCHONDRIAL"/>
    <property type="match status" value="1"/>
</dbReference>
<dbReference type="PANTHER" id="PTHR11405">
    <property type="entry name" value="CARBAMOYLTRANSFERASE FAMILY MEMBER"/>
    <property type="match status" value="1"/>
</dbReference>
<dbReference type="Pfam" id="PF02786">
    <property type="entry name" value="CPSase_L_D2"/>
    <property type="match status" value="2"/>
</dbReference>
<dbReference type="Pfam" id="PF02787">
    <property type="entry name" value="CPSase_L_D3"/>
    <property type="match status" value="1"/>
</dbReference>
<dbReference type="Pfam" id="PF02142">
    <property type="entry name" value="MGS"/>
    <property type="match status" value="1"/>
</dbReference>
<dbReference type="PRINTS" id="PR00098">
    <property type="entry name" value="CPSASE"/>
</dbReference>
<dbReference type="SMART" id="SM01096">
    <property type="entry name" value="CPSase_L_D3"/>
    <property type="match status" value="1"/>
</dbReference>
<dbReference type="SMART" id="SM00851">
    <property type="entry name" value="MGS"/>
    <property type="match status" value="1"/>
</dbReference>
<dbReference type="SUPFAM" id="SSF48108">
    <property type="entry name" value="Carbamoyl phosphate synthetase, large subunit connection domain"/>
    <property type="match status" value="1"/>
</dbReference>
<dbReference type="SUPFAM" id="SSF56059">
    <property type="entry name" value="Glutathione synthetase ATP-binding domain-like"/>
    <property type="match status" value="2"/>
</dbReference>
<dbReference type="SUPFAM" id="SSF52335">
    <property type="entry name" value="Methylglyoxal synthase-like"/>
    <property type="match status" value="1"/>
</dbReference>
<dbReference type="SUPFAM" id="SSF52440">
    <property type="entry name" value="PreATP-grasp domain"/>
    <property type="match status" value="2"/>
</dbReference>
<dbReference type="PROSITE" id="PS50975">
    <property type="entry name" value="ATP_GRASP"/>
    <property type="match status" value="2"/>
</dbReference>
<dbReference type="PROSITE" id="PS00867">
    <property type="entry name" value="CPSASE_2"/>
    <property type="match status" value="2"/>
</dbReference>
<dbReference type="PROSITE" id="PS51855">
    <property type="entry name" value="MGS"/>
    <property type="match status" value="1"/>
</dbReference>